<name>SPAST_PIG</name>
<protein>
    <recommendedName>
        <fullName evidence="3">Spastin</fullName>
        <ecNumber evidence="3">5.6.1.1</ecNumber>
    </recommendedName>
</protein>
<gene>
    <name evidence="3" type="primary">SPAST</name>
    <name evidence="3" type="synonym">SPG4</name>
</gene>
<dbReference type="EC" id="5.6.1.1" evidence="3"/>
<dbReference type="EMBL" id="CU694619">
    <property type="status" value="NOT_ANNOTATED_CDS"/>
    <property type="molecule type" value="Genomic_DNA"/>
</dbReference>
<dbReference type="EMBL" id="FP583344">
    <property type="status" value="NOT_ANNOTATED_CDS"/>
    <property type="molecule type" value="Genomic_DNA"/>
</dbReference>
<dbReference type="EMBL" id="AF540879">
    <property type="protein sequence ID" value="AAQ11224.1"/>
    <property type="status" value="ALT_INIT"/>
    <property type="molecule type" value="mRNA"/>
</dbReference>
<dbReference type="RefSeq" id="NP_998914.1">
    <property type="nucleotide sequence ID" value="NM_213749.1"/>
</dbReference>
<dbReference type="SMR" id="Q719N1"/>
<dbReference type="FunCoup" id="Q719N1">
    <property type="interactions" value="2018"/>
</dbReference>
<dbReference type="STRING" id="9823.ENSSSCP00000068761"/>
<dbReference type="GlyGen" id="Q719N1">
    <property type="glycosylation" value="1 site"/>
</dbReference>
<dbReference type="PaxDb" id="9823-ENSSSCP00000009083"/>
<dbReference type="PeptideAtlas" id="Q719N1"/>
<dbReference type="Ensembl" id="ENSSSCT00015075466.1">
    <property type="protein sequence ID" value="ENSSSCP00015030272.1"/>
    <property type="gene ID" value="ENSSSCG00015056092.1"/>
</dbReference>
<dbReference type="Ensembl" id="ENSSSCT00030045517.1">
    <property type="protein sequence ID" value="ENSSSCP00030020483.1"/>
    <property type="gene ID" value="ENSSSCG00030032740.1"/>
</dbReference>
<dbReference type="Ensembl" id="ENSSSCT00040010438.1">
    <property type="protein sequence ID" value="ENSSSCP00040004060.1"/>
    <property type="gene ID" value="ENSSSCG00040007869.1"/>
</dbReference>
<dbReference type="Ensembl" id="ENSSSCT00045026529.1">
    <property type="protein sequence ID" value="ENSSSCP00045018309.1"/>
    <property type="gene ID" value="ENSSSCG00045015548.1"/>
</dbReference>
<dbReference type="Ensembl" id="ENSSSCT00050065540.1">
    <property type="protein sequence ID" value="ENSSSCP00050028228.1"/>
    <property type="gene ID" value="ENSSSCG00050048078.1"/>
</dbReference>
<dbReference type="Ensembl" id="ENSSSCT00055023599.1">
    <property type="protein sequence ID" value="ENSSSCP00055018661.1"/>
    <property type="gene ID" value="ENSSSCG00055011862.1"/>
</dbReference>
<dbReference type="Ensembl" id="ENSSSCT00060065463.1">
    <property type="protein sequence ID" value="ENSSSCP00060028026.1"/>
    <property type="gene ID" value="ENSSSCG00060048175.1"/>
</dbReference>
<dbReference type="Ensembl" id="ENSSSCT00085032800">
    <property type="protein sequence ID" value="ENSSSCP00085022604"/>
    <property type="gene ID" value="ENSSSCG00085017225"/>
</dbReference>
<dbReference type="Ensembl" id="ENSSSCT00105042998">
    <property type="protein sequence ID" value="ENSSSCP00105029907"/>
    <property type="gene ID" value="ENSSSCG00105022520"/>
</dbReference>
<dbReference type="Ensembl" id="ENSSSCT00115024378">
    <property type="protein sequence ID" value="ENSSSCP00115023118"/>
    <property type="gene ID" value="ENSSSCG00115013426"/>
</dbReference>
<dbReference type="Ensembl" id="ENSSSCT00130017344">
    <property type="protein sequence ID" value="ENSSSCP00130011779"/>
    <property type="gene ID" value="ENSSSCG00130009302"/>
</dbReference>
<dbReference type="GeneID" id="396584"/>
<dbReference type="KEGG" id="ssc:396584"/>
<dbReference type="CTD" id="6683"/>
<dbReference type="eggNOG" id="KOG0740">
    <property type="taxonomic scope" value="Eukaryota"/>
</dbReference>
<dbReference type="InParanoid" id="Q719N1"/>
<dbReference type="OrthoDB" id="10251136at2759"/>
<dbReference type="TreeFam" id="TF105014"/>
<dbReference type="Reactome" id="R-SSC-9668328">
    <property type="pathway name" value="Sealing of the nuclear envelope (NE) by ESCRT-III"/>
</dbReference>
<dbReference type="Proteomes" id="UP000008227">
    <property type="component" value="Unplaced"/>
</dbReference>
<dbReference type="Proteomes" id="UP000314985">
    <property type="component" value="Unplaced"/>
</dbReference>
<dbReference type="Proteomes" id="UP000694570">
    <property type="component" value="Unplaced"/>
</dbReference>
<dbReference type="Proteomes" id="UP000694571">
    <property type="component" value="Unplaced"/>
</dbReference>
<dbReference type="Proteomes" id="UP000694720">
    <property type="component" value="Unplaced"/>
</dbReference>
<dbReference type="Proteomes" id="UP000694722">
    <property type="component" value="Unplaced"/>
</dbReference>
<dbReference type="Proteomes" id="UP000694723">
    <property type="component" value="Unplaced"/>
</dbReference>
<dbReference type="Proteomes" id="UP000694724">
    <property type="component" value="Unplaced"/>
</dbReference>
<dbReference type="Proteomes" id="UP000694725">
    <property type="component" value="Unplaced"/>
</dbReference>
<dbReference type="Proteomes" id="UP000694726">
    <property type="component" value="Unplaced"/>
</dbReference>
<dbReference type="Proteomes" id="UP000694727">
    <property type="component" value="Unplaced"/>
</dbReference>
<dbReference type="Proteomes" id="UP000694728">
    <property type="component" value="Unplaced"/>
</dbReference>
<dbReference type="GO" id="GO:0030424">
    <property type="term" value="C:axon"/>
    <property type="evidence" value="ECO:0000250"/>
    <property type="project" value="UniProtKB"/>
</dbReference>
<dbReference type="GO" id="GO:1904115">
    <property type="term" value="C:axon cytoplasm"/>
    <property type="evidence" value="ECO:0007669"/>
    <property type="project" value="GOC"/>
</dbReference>
<dbReference type="GO" id="GO:0005813">
    <property type="term" value="C:centrosome"/>
    <property type="evidence" value="ECO:0007669"/>
    <property type="project" value="UniProtKB-SubCell"/>
</dbReference>
<dbReference type="GO" id="GO:0005783">
    <property type="term" value="C:endoplasmic reticulum"/>
    <property type="evidence" value="ECO:0007669"/>
    <property type="project" value="UniProtKB-SubCell"/>
</dbReference>
<dbReference type="GO" id="GO:0005768">
    <property type="term" value="C:endosome"/>
    <property type="evidence" value="ECO:0007669"/>
    <property type="project" value="UniProtKB-UniRule"/>
</dbReference>
<dbReference type="GO" id="GO:0005874">
    <property type="term" value="C:microtubule"/>
    <property type="evidence" value="ECO:0007669"/>
    <property type="project" value="UniProtKB-UniRule"/>
</dbReference>
<dbReference type="GO" id="GO:0015630">
    <property type="term" value="C:microtubule cytoskeleton"/>
    <property type="evidence" value="ECO:0000318"/>
    <property type="project" value="GO_Central"/>
</dbReference>
<dbReference type="GO" id="GO:0030496">
    <property type="term" value="C:midbody"/>
    <property type="evidence" value="ECO:0007669"/>
    <property type="project" value="UniProtKB-SubCell"/>
</dbReference>
<dbReference type="GO" id="GO:0031965">
    <property type="term" value="C:nuclear membrane"/>
    <property type="evidence" value="ECO:0000250"/>
    <property type="project" value="UniProtKB"/>
</dbReference>
<dbReference type="GO" id="GO:0005634">
    <property type="term" value="C:nucleus"/>
    <property type="evidence" value="ECO:0000250"/>
    <property type="project" value="UniProtKB"/>
</dbReference>
<dbReference type="GO" id="GO:0048471">
    <property type="term" value="C:perinuclear region of cytoplasm"/>
    <property type="evidence" value="ECO:0007669"/>
    <property type="project" value="UniProtKB-SubCell"/>
</dbReference>
<dbReference type="GO" id="GO:0000922">
    <property type="term" value="C:spindle pole"/>
    <property type="evidence" value="ECO:0000250"/>
    <property type="project" value="UniProtKB"/>
</dbReference>
<dbReference type="GO" id="GO:0043014">
    <property type="term" value="F:alpha-tubulin binding"/>
    <property type="evidence" value="ECO:0000250"/>
    <property type="project" value="UniProtKB"/>
</dbReference>
<dbReference type="GO" id="GO:0005524">
    <property type="term" value="F:ATP binding"/>
    <property type="evidence" value="ECO:0007669"/>
    <property type="project" value="UniProtKB-UniRule"/>
</dbReference>
<dbReference type="GO" id="GO:0016887">
    <property type="term" value="F:ATP hydrolysis activity"/>
    <property type="evidence" value="ECO:0000318"/>
    <property type="project" value="GO_Central"/>
</dbReference>
<dbReference type="GO" id="GO:0048487">
    <property type="term" value="F:beta-tubulin binding"/>
    <property type="evidence" value="ECO:0000250"/>
    <property type="project" value="UniProtKB"/>
</dbReference>
<dbReference type="GO" id="GO:0008017">
    <property type="term" value="F:microtubule binding"/>
    <property type="evidence" value="ECO:0000250"/>
    <property type="project" value="UniProtKB"/>
</dbReference>
<dbReference type="GO" id="GO:0008568">
    <property type="term" value="F:microtubule severing ATPase activity"/>
    <property type="evidence" value="ECO:0000250"/>
    <property type="project" value="UniProtKB"/>
</dbReference>
<dbReference type="GO" id="GO:0008089">
    <property type="term" value="P:anterograde axonal transport"/>
    <property type="evidence" value="ECO:0000250"/>
    <property type="project" value="UniProtKB"/>
</dbReference>
<dbReference type="GO" id="GO:0019896">
    <property type="term" value="P:axonal transport of mitochondrion"/>
    <property type="evidence" value="ECO:0000250"/>
    <property type="project" value="UniProtKB"/>
</dbReference>
<dbReference type="GO" id="GO:0007409">
    <property type="term" value="P:axonogenesis"/>
    <property type="evidence" value="ECO:0007669"/>
    <property type="project" value="UniProtKB-UniRule"/>
</dbReference>
<dbReference type="GO" id="GO:0032506">
    <property type="term" value="P:cytokinetic process"/>
    <property type="evidence" value="ECO:0000250"/>
    <property type="project" value="UniProtKB"/>
</dbReference>
<dbReference type="GO" id="GO:0006888">
    <property type="term" value="P:endoplasmic reticulum to Golgi vesicle-mediated transport"/>
    <property type="evidence" value="ECO:0000250"/>
    <property type="project" value="UniProtKB"/>
</dbReference>
<dbReference type="GO" id="GO:0010458">
    <property type="term" value="P:exit from mitosis"/>
    <property type="evidence" value="ECO:0000250"/>
    <property type="project" value="UniProtKB"/>
</dbReference>
<dbReference type="GO" id="GO:0090148">
    <property type="term" value="P:membrane fission"/>
    <property type="evidence" value="ECO:0000250"/>
    <property type="project" value="UniProtKB"/>
</dbReference>
<dbReference type="GO" id="GO:0001578">
    <property type="term" value="P:microtubule bundle formation"/>
    <property type="evidence" value="ECO:0000250"/>
    <property type="project" value="UniProtKB"/>
</dbReference>
<dbReference type="GO" id="GO:0051013">
    <property type="term" value="P:microtubule severing"/>
    <property type="evidence" value="ECO:0000250"/>
    <property type="project" value="UniProtKB"/>
</dbReference>
<dbReference type="GO" id="GO:0000281">
    <property type="term" value="P:mitotic cytokinesis"/>
    <property type="evidence" value="ECO:0000250"/>
    <property type="project" value="UniProtKB"/>
</dbReference>
<dbReference type="GO" id="GO:0051228">
    <property type="term" value="P:mitotic spindle disassembly"/>
    <property type="evidence" value="ECO:0000250"/>
    <property type="project" value="UniProtKB"/>
</dbReference>
<dbReference type="GO" id="GO:0031468">
    <property type="term" value="P:nuclear membrane reassembly"/>
    <property type="evidence" value="ECO:0000250"/>
    <property type="project" value="UniProtKB"/>
</dbReference>
<dbReference type="GO" id="GO:0031117">
    <property type="term" value="P:positive regulation of microtubule depolymerization"/>
    <property type="evidence" value="ECO:0007669"/>
    <property type="project" value="UniProtKB-UniRule"/>
</dbReference>
<dbReference type="GO" id="GO:0034214">
    <property type="term" value="P:protein hexamerization"/>
    <property type="evidence" value="ECO:0000250"/>
    <property type="project" value="UniProtKB"/>
</dbReference>
<dbReference type="GO" id="GO:0051260">
    <property type="term" value="P:protein homooligomerization"/>
    <property type="evidence" value="ECO:0000250"/>
    <property type="project" value="UniProtKB"/>
</dbReference>
<dbReference type="CDD" id="cd02679">
    <property type="entry name" value="MIT_spastin"/>
    <property type="match status" value="1"/>
</dbReference>
<dbReference type="CDD" id="cd19524">
    <property type="entry name" value="RecA-like_spastin"/>
    <property type="match status" value="1"/>
</dbReference>
<dbReference type="FunFam" id="3.40.50.300:FF:000093">
    <property type="entry name" value="Fidgetin-like 1"/>
    <property type="match status" value="1"/>
</dbReference>
<dbReference type="FunFam" id="1.10.8.60:FF:000036">
    <property type="entry name" value="Spastin"/>
    <property type="match status" value="1"/>
</dbReference>
<dbReference type="FunFam" id="1.20.58.80:FF:000006">
    <property type="entry name" value="Spastin"/>
    <property type="match status" value="1"/>
</dbReference>
<dbReference type="Gene3D" id="1.10.8.60">
    <property type="match status" value="1"/>
</dbReference>
<dbReference type="Gene3D" id="3.40.50.300">
    <property type="entry name" value="P-loop containing nucleotide triphosphate hydrolases"/>
    <property type="match status" value="1"/>
</dbReference>
<dbReference type="Gene3D" id="1.20.58.80">
    <property type="entry name" value="Phosphotransferase system, lactose/cellobiose-type IIA subunit"/>
    <property type="match status" value="1"/>
</dbReference>
<dbReference type="HAMAP" id="MF_03021">
    <property type="entry name" value="Spastin"/>
    <property type="match status" value="1"/>
</dbReference>
<dbReference type="InterPro" id="IPR003593">
    <property type="entry name" value="AAA+_ATPase"/>
</dbReference>
<dbReference type="InterPro" id="IPR041569">
    <property type="entry name" value="AAA_lid_3"/>
</dbReference>
<dbReference type="InterPro" id="IPR003959">
    <property type="entry name" value="ATPase_AAA_core"/>
</dbReference>
<dbReference type="InterPro" id="IPR003960">
    <property type="entry name" value="ATPase_AAA_CS"/>
</dbReference>
<dbReference type="InterPro" id="IPR007330">
    <property type="entry name" value="MIT_dom"/>
</dbReference>
<dbReference type="InterPro" id="IPR050304">
    <property type="entry name" value="MT-severing_AAA_ATPase"/>
</dbReference>
<dbReference type="InterPro" id="IPR027417">
    <property type="entry name" value="P-loop_NTPase"/>
</dbReference>
<dbReference type="InterPro" id="IPR015415">
    <property type="entry name" value="Spast_Vps4_C"/>
</dbReference>
<dbReference type="InterPro" id="IPR017179">
    <property type="entry name" value="Spastin"/>
</dbReference>
<dbReference type="InterPro" id="IPR035106">
    <property type="entry name" value="Spastin_chordate"/>
</dbReference>
<dbReference type="PANTHER" id="PTHR23074">
    <property type="entry name" value="AAA DOMAIN-CONTAINING"/>
    <property type="match status" value="1"/>
</dbReference>
<dbReference type="PANTHER" id="PTHR23074:SF86">
    <property type="entry name" value="SPASTIN"/>
    <property type="match status" value="1"/>
</dbReference>
<dbReference type="Pfam" id="PF00004">
    <property type="entry name" value="AAA"/>
    <property type="match status" value="1"/>
</dbReference>
<dbReference type="Pfam" id="PF17862">
    <property type="entry name" value="AAA_lid_3"/>
    <property type="match status" value="1"/>
</dbReference>
<dbReference type="Pfam" id="PF09336">
    <property type="entry name" value="Vps4_C"/>
    <property type="match status" value="1"/>
</dbReference>
<dbReference type="PIRSF" id="PIRSF037338">
    <property type="entry name" value="Spastin"/>
    <property type="match status" value="1"/>
</dbReference>
<dbReference type="SMART" id="SM00382">
    <property type="entry name" value="AAA"/>
    <property type="match status" value="1"/>
</dbReference>
<dbReference type="SMART" id="SM00745">
    <property type="entry name" value="MIT"/>
    <property type="match status" value="1"/>
</dbReference>
<dbReference type="SUPFAM" id="SSF52540">
    <property type="entry name" value="P-loop containing nucleoside triphosphate hydrolases"/>
    <property type="match status" value="1"/>
</dbReference>
<dbReference type="PROSITE" id="PS00674">
    <property type="entry name" value="AAA"/>
    <property type="match status" value="1"/>
</dbReference>
<accession>Q719N1</accession>
<accession>F1S3Z2</accession>
<keyword id="KW-0021">Allosteric enzyme</keyword>
<keyword id="KW-0067">ATP-binding</keyword>
<keyword id="KW-0131">Cell cycle</keyword>
<keyword id="KW-0132">Cell division</keyword>
<keyword id="KW-0966">Cell projection</keyword>
<keyword id="KW-0963">Cytoplasm</keyword>
<keyword id="KW-0206">Cytoskeleton</keyword>
<keyword id="KW-0217">Developmental protein</keyword>
<keyword id="KW-0221">Differentiation</keyword>
<keyword id="KW-0256">Endoplasmic reticulum</keyword>
<keyword id="KW-0413">Isomerase</keyword>
<keyword id="KW-0472">Membrane</keyword>
<keyword id="KW-0493">Microtubule</keyword>
<keyword id="KW-0524">Neurogenesis</keyword>
<keyword id="KW-0547">Nucleotide-binding</keyword>
<keyword id="KW-0539">Nucleus</keyword>
<keyword id="KW-0597">Phosphoprotein</keyword>
<keyword id="KW-1185">Reference proteome</keyword>
<evidence type="ECO:0000250" key="1">
    <source>
        <dbReference type="UniProtKB" id="Q9UBP0"/>
    </source>
</evidence>
<evidence type="ECO:0000255" key="2"/>
<evidence type="ECO:0000255" key="3">
    <source>
        <dbReference type="HAMAP-Rule" id="MF_03021"/>
    </source>
</evidence>
<evidence type="ECO:0000256" key="4">
    <source>
        <dbReference type="SAM" id="MobiDB-lite"/>
    </source>
</evidence>
<evidence type="ECO:0000305" key="5"/>
<reference key="1">
    <citation type="submission" date="2009-11" db="EMBL/GenBank/DDBJ databases">
        <authorList>
            <consortium name="Porcine genome sequencing project"/>
        </authorList>
    </citation>
    <scope>NUCLEOTIDE SEQUENCE [LARGE SCALE GENOMIC DNA]</scope>
</reference>
<reference key="2">
    <citation type="journal article" date="2007" name="J. Anim. Breed. Genet.">
        <title>Analysis and mapping of CACNB4, CHRNA1, KCNJ3, SCN2A and SPG4, physiological candidate genes for porcine congenital progressive ataxia and spastic paresis.</title>
        <authorList>
            <person name="Genini S."/>
            <person name="Kratzsch A."/>
            <person name="Korczak B."/>
            <person name="Neuenschwander S."/>
            <person name="Brenig B."/>
            <person name="Jorg H."/>
            <person name="Burgi E."/>
            <person name="Ossent P."/>
            <person name="Stranzinger G."/>
            <person name="Vogeli P."/>
        </authorList>
    </citation>
    <scope>NUCLEOTIDE SEQUENCE [MRNA] OF 4-616</scope>
</reference>
<proteinExistence type="evidence at transcript level"/>
<organism>
    <name type="scientific">Sus scrofa</name>
    <name type="common">Pig</name>
    <dbReference type="NCBI Taxonomy" id="9823"/>
    <lineage>
        <taxon>Eukaryota</taxon>
        <taxon>Metazoa</taxon>
        <taxon>Chordata</taxon>
        <taxon>Craniata</taxon>
        <taxon>Vertebrata</taxon>
        <taxon>Euteleostomi</taxon>
        <taxon>Mammalia</taxon>
        <taxon>Eutheria</taxon>
        <taxon>Laurasiatheria</taxon>
        <taxon>Artiodactyla</taxon>
        <taxon>Suina</taxon>
        <taxon>Suidae</taxon>
        <taxon>Sus</taxon>
    </lineage>
</organism>
<comment type="function">
    <text evidence="3">ATP-dependent microtubule severing protein that specifically recognizes and cuts microtubules that are polyglutamylated. Preferentially recognizes and acts on microtubules decorated with short polyglutamate tails: severing activity increases as the number of glutamates per tubulin rises from one to eight, but decreases beyond this glutamylation threshold. Severing activity is not dependent on tubulin acetylation or detyrosination. Microtubule severing promotes reorganization of cellular microtubule arrays and the release of microtubules from the centrosome following nucleation. It is critical for the biogenesis and maintenance of complex microtubule arrays in axons, spindles and cilia. SPAST is involved in abscission step of cytokinesis and nuclear envelope reassembly during anaphase in cooperation with the ESCRT-III complex. Recruited at the midbody, probably by IST1, and participates in membrane fission during abscission together with the ESCRT-III complex. Recruited to the nuclear membrane by IST1 and mediates microtubule severing, promoting nuclear envelope sealing and mitotic spindle disassembly during late anaphase. Required for membrane traffic from the endoplasmic reticulum (ER) to the Golgi and endosome recycling. Recruited by IST1 to endosomes and regulates early endosomal tubulation and recycling by mediating microtubule severing. Probably plays a role in axon growth and the formation of axonal branches.</text>
</comment>
<comment type="catalytic activity">
    <reaction evidence="3">
        <text>n ATP + n H2O + a microtubule = n ADP + n phosphate + (n+1) alpha/beta tubulin heterodimers.</text>
        <dbReference type="EC" id="5.6.1.1"/>
    </reaction>
</comment>
<comment type="activity regulation">
    <text evidence="3">Allosteric enzyme with a cooperative mechanism; at least two neighbor subunits influence each other strongly in spastin hexamers. Microtubule binding promotes cooperative interactions among spastin subunits.</text>
</comment>
<comment type="subunit">
    <text evidence="3">Homohexamer. Mostly monomeric, but assembles into hexameric structure for short periods of time. Oligomerization seems to be a prerequisite for catalytic activity. Binding to ATP in a cleft between two adjacent subunits stabilizes the homohexameric form. Binds to microtubules at least in part via the alpha-tubulin and beta-tubulin tails. The hexamer adopts a ring conformation through which microtubules pass prior to being severed. Does not interact strongly with tubulin heterodimers. Interacts (via MIT domain) with CHMP1B; the interaction is direct. Interacts with SSNA1. Interacts with ATL1. Interacts with RTN1. Interacts with ZFYVE27. Interacts with REEP1. Interacts (via MIT domain) with IST1.</text>
</comment>
<comment type="subcellular location">
    <subcellularLocation>
        <location evidence="3">Membrane</location>
        <topology evidence="3">Peripheral membrane protein</topology>
    </subcellularLocation>
    <subcellularLocation>
        <location evidence="3">Endoplasmic reticulum</location>
    </subcellularLocation>
    <subcellularLocation>
        <location evidence="3">Midbody</location>
    </subcellularLocation>
    <subcellularLocation>
        <location evidence="3">Cytoplasm</location>
        <location evidence="3">Cytoskeleton</location>
        <location evidence="3">Microtubule organizing center</location>
        <location evidence="3">Centrosome</location>
    </subcellularLocation>
    <subcellularLocation>
        <location evidence="3">Cytoplasm</location>
        <location evidence="3">Cytoskeleton</location>
    </subcellularLocation>
    <subcellularLocation>
        <location evidence="3">Cytoplasm</location>
        <location evidence="3">Perinuclear region</location>
    </subcellularLocation>
    <subcellularLocation>
        <location evidence="3">Nucleus</location>
    </subcellularLocation>
    <subcellularLocation>
        <location evidence="3">Cytoplasm</location>
        <location evidence="3">Cytoskeleton</location>
        <location evidence="3">Spindle</location>
    </subcellularLocation>
    <subcellularLocation>
        <location evidence="3">Cytoplasm</location>
    </subcellularLocation>
    <subcellularLocation>
        <location evidence="1">Cell projection</location>
        <location evidence="1">Axon</location>
    </subcellularLocation>
    <text evidence="1 3">Forms an intramembrane hairpin-like structure in the membrane. Localization to the centrosome is independent of microtubules. Localizes to the midbody of dividing cells, and this requires CHMP1B. Enriched in the distal axons and branches of postmitotic neurons. Localizes to endoplasmic reticulum tubular network. Mainly nuclear in interphase cells and becomes associated with the centrosomes, spindle microtubules, midzone and finally the midbody during cell division (By similarity).</text>
</comment>
<comment type="similarity">
    <text evidence="3">Belongs to the AAA ATPase family. Spastin subfamily.</text>
</comment>
<comment type="sequence caution" evidence="5">
    <conflict type="erroneous initiation">
        <sequence resource="EMBL-CDS" id="AAQ11224"/>
    </conflict>
</comment>
<comment type="sequence caution" evidence="5">
    <conflict type="erroneous gene model prediction">
        <sequence resource="EMBL" id="CU694619"/>
    </conflict>
</comment>
<comment type="sequence caution" evidence="5">
    <conflict type="erroneous gene model prediction">
        <sequence resource="EMBL" id="FP583344"/>
    </conflict>
</comment>
<feature type="chain" id="PRO_0000367134" description="Spastin">
    <location>
        <begin position="1"/>
        <end position="616"/>
    </location>
</feature>
<feature type="topological domain" description="Cytoplasmic" evidence="3">
    <location>
        <begin position="1"/>
        <end position="56"/>
    </location>
</feature>
<feature type="intramembrane region" description="Helical" evidence="3">
    <location>
        <begin position="57"/>
        <end position="77"/>
    </location>
</feature>
<feature type="topological domain" description="Cytoplasmic" evidence="3">
    <location>
        <begin position="78"/>
        <end position="616"/>
    </location>
</feature>
<feature type="domain" description="MIT" evidence="2">
    <location>
        <begin position="120"/>
        <end position="195"/>
    </location>
</feature>
<feature type="region of interest" description="Required for interaction with RTN1" evidence="1">
    <location>
        <begin position="1"/>
        <end position="300"/>
    </location>
</feature>
<feature type="region of interest" description="Required for midbody localization" evidence="1">
    <location>
        <begin position="1"/>
        <end position="194"/>
    </location>
</feature>
<feature type="region of interest" description="Required for interaction with ATL1" evidence="1">
    <location>
        <begin position="1"/>
        <end position="80"/>
    </location>
</feature>
<feature type="region of interest" description="Required for nuclear localization" evidence="1">
    <location>
        <begin position="1"/>
        <end position="50"/>
    </location>
</feature>
<feature type="region of interest" description="Disordered" evidence="4">
    <location>
        <begin position="1"/>
        <end position="44"/>
    </location>
</feature>
<feature type="region of interest" description="Required for interaction with SSNA1 and microtubules" evidence="1">
    <location>
        <begin position="50"/>
        <end position="87"/>
    </location>
</feature>
<feature type="region of interest" description="Sufficient for interaction with CHMP1B" evidence="1">
    <location>
        <begin position="112"/>
        <end position="196"/>
    </location>
</feature>
<feature type="region of interest" description="Required for interaction with microtubules" evidence="1">
    <location>
        <begin position="114"/>
        <end position="200"/>
    </location>
</feature>
<feature type="region of interest" description="Disordered" evidence="4">
    <location>
        <begin position="223"/>
        <end position="266"/>
    </location>
</feature>
<feature type="region of interest" description="Sufficient for interaction with microtubules" evidence="1">
    <location>
        <begin position="226"/>
        <end position="328"/>
    </location>
</feature>
<feature type="region of interest" description="Sufficient for microtubule severing" evidence="1">
    <location>
        <begin position="228"/>
        <end position="616"/>
    </location>
</feature>
<feature type="region of interest" description="Required for interaction with microtubules and microtubule severing" evidence="1">
    <location>
        <begin position="270"/>
        <end position="328"/>
    </location>
</feature>
<feature type="region of interest" description="Disordered" evidence="4">
    <location>
        <begin position="278"/>
        <end position="311"/>
    </location>
</feature>
<feature type="region of interest" description="Required for interaction with microtubules" evidence="1">
    <location>
        <begin position="310"/>
        <end position="312"/>
    </location>
</feature>
<feature type="short sequence motif" description="Nuclear localization signal" evidence="3">
    <location>
        <begin position="4"/>
        <end position="11"/>
    </location>
</feature>
<feature type="short sequence motif" description="Nuclear export signal" evidence="3">
    <location>
        <begin position="59"/>
        <end position="67"/>
    </location>
</feature>
<feature type="short sequence motif" description="Nuclear localization signal" evidence="3">
    <location>
        <begin position="309"/>
        <end position="312"/>
    </location>
</feature>
<feature type="compositionally biased region" description="Pro residues" evidence="4">
    <location>
        <begin position="18"/>
        <end position="28"/>
    </location>
</feature>
<feature type="compositionally biased region" description="Pro residues" evidence="4">
    <location>
        <begin position="35"/>
        <end position="44"/>
    </location>
</feature>
<feature type="compositionally biased region" description="Polar residues" evidence="4">
    <location>
        <begin position="283"/>
        <end position="306"/>
    </location>
</feature>
<feature type="binding site" evidence="3">
    <location>
        <begin position="382"/>
        <end position="389"/>
    </location>
    <ligand>
        <name>ATP</name>
        <dbReference type="ChEBI" id="CHEBI:30616"/>
    </ligand>
</feature>
<feature type="modified residue" description="Phosphoserine" evidence="1">
    <location>
        <position position="245"/>
    </location>
</feature>
<feature type="modified residue" description="Phosphoserine" evidence="1">
    <location>
        <position position="268"/>
    </location>
</feature>
<feature type="modified residue" description="Phosphothreonine" evidence="1">
    <location>
        <position position="306"/>
    </location>
</feature>
<feature type="modified residue" description="Phosphoserine" evidence="1">
    <location>
        <position position="597"/>
    </location>
</feature>
<sequence>MNSPGGRGKKKGSGGPSSPVPPRPPPPCLASSRPAPRPAPPPQSPHKRNLYYFSYPLFLGFALLRLVAFHLGLLFVWLCQRFSRALMAAKRSSRAAPAPASASPPAPVPGGEVERVRAFHKQAFEYISVALRIDEDEKVGQKEQAVEWYKKGIEELEKGIAVVVTGQGEQCERARRLQAKMMTNLVMAKDRLQLLEKLQPVLQFSKSQMDVYNDSTNLTCRNGHLQSESGAVPKRKDPLTHPSNSLPRSKAIMKTGSTGLSGHHRAPSCSGLSIVSGMRQGPGPTTATHKSTPKTNRTNKPSTPTTAPRKKKDLKNFRNVDSNLANFIMNEIVDNGTAVKFDDIAGQELAKQALQEIVILPSLRPELFTGLRAPARGLLLFGPPGNGKTMLAKAVAAESNATFFNISAASLTSKYVGEGEKLVRALFAVARELQPSIIFIDEVDSLLRERREGEHDASRRLKTEFLIEFDGVQSAGDDRVLVMGATNRPQELDEAVLRRFIKRVYVSLPNEETRLLLLKNLLCKQGSPLTQKELAQLARLTDGYSGSDLTALAKDAALGPIRELKPEQVKNMSASEMRNIRLSDFTESLKKIKRSVSPQTLEAYIRWNKDFGDTTV</sequence>